<proteinExistence type="evidence at transcript level"/>
<comment type="function">
    <text evidence="3">Component of SEC61 channel-forming translocon complex that mediates transport of signal peptide-containing precursor polypeptides across the endoplasmic reticulum (ER). Forms a ribosome receptor and a gated pore in the ER membrane, both functions required for cotranslational translocation of nascent polypeptides. May cooperate with auxiliary protein SEC62, SEC63 and HSPA5/BiP to enable post-translational transport of small presecretory proteins. The SEC61 channel is also involved in ER membrane insertion of transmembrane proteins: it mediates membrane insertion of the first few transmembrane segments of proteins, while insertion of subsequent transmembrane regions of multi-pass membrane proteins is mediated by the multi-pass translocon (MPT) complex.</text>
</comment>
<comment type="subunit">
    <text evidence="2 3">The SEC61 channel-forming translocon complex consists of channel-forming core components SEC61A1, SEC61B and SEC61G and different auxiliary components such as SEC62 and SEC63 (By similarity). The SEC61 channel associates with the multi-pass translocon (MPT) complex (By similarity).</text>
</comment>
<comment type="subcellular location">
    <subcellularLocation>
        <location evidence="3">Endoplasmic reticulum membrane</location>
        <topology evidence="3">Multi-pass membrane protein</topology>
    </subcellularLocation>
</comment>
<comment type="similarity">
    <text evidence="5">Belongs to the SecY/SEC61-alpha family.</text>
</comment>
<organism>
    <name type="scientific">Boreogadus saida</name>
    <name type="common">Polar cod</name>
    <name type="synonym">Gadus saida</name>
    <dbReference type="NCBI Taxonomy" id="44932"/>
    <lineage>
        <taxon>Eukaryota</taxon>
        <taxon>Metazoa</taxon>
        <taxon>Chordata</taxon>
        <taxon>Craniata</taxon>
        <taxon>Vertebrata</taxon>
        <taxon>Euteleostomi</taxon>
        <taxon>Actinopterygii</taxon>
        <taxon>Neopterygii</taxon>
        <taxon>Teleostei</taxon>
        <taxon>Neoteleostei</taxon>
        <taxon>Acanthomorphata</taxon>
        <taxon>Zeiogadaria</taxon>
        <taxon>Gadariae</taxon>
        <taxon>Gadiformes</taxon>
        <taxon>Gadoidei</taxon>
        <taxon>Gadidae</taxon>
        <taxon>Boreogadus</taxon>
    </lineage>
</organism>
<sequence length="476" mass="52302">MGIKFLEVIKPFCAVLPEIQKPERKIQFREKVLWTAITLFIFLVCCQIPLFGIMSSDSADPFYWMRVILASNRGTLMELGISPIVTSDLIMQLLAGAKIIEVGDSPKDRALFNGAQKLFGMIITIGQAIVYVMTGMYGDPSEMGAGICLVIIIQLFVAGLIVLLLDELLQKGYGLGSGISLLIATNICETIVWKAFSPTTVNTGRGTEFEGAIIALFHLLATRTDKVRALREAFYRQNLPNLMNLIATVFVFAVVIYFQGFRVDLPIKSARYRGQYNTYPIKLFYTSNIPIILQSALVSNLYVISQMLSTRFSGNFIVNLLGTWSDTSTGGPARAYPVGGLCYFLSPPESFGSVLDDPVHAAIYIVFMLGSCAFFSKTWIEVSGSSAKDVAKQLKEQQMVMRGHRETSMVHELNRYIPTAAAFGGLCIGGLSVMADFLGAIGSGTGILLAVTIIYQYFEIFVKEQSEMGSMGGLFF</sequence>
<name>SC61A_BORSA</name>
<feature type="initiator methionine" description="Removed" evidence="1">
    <location>
        <position position="1"/>
    </location>
</feature>
<feature type="chain" id="PRO_0000131799" description="Protein transport protein Sec61 subunit alpha">
    <location>
        <begin position="2"/>
        <end position="476"/>
    </location>
</feature>
<feature type="topological domain" description="Cytoplasmic" evidence="4">
    <location>
        <begin position="2"/>
        <end position="33"/>
    </location>
</feature>
<feature type="transmembrane region" description="Helical" evidence="4">
    <location>
        <begin position="34"/>
        <end position="53"/>
    </location>
</feature>
<feature type="topological domain" description="Lumenal" evidence="4">
    <location>
        <begin position="54"/>
        <end position="76"/>
    </location>
</feature>
<feature type="transmembrane region" description="Helical" evidence="4">
    <location>
        <begin position="77"/>
        <end position="96"/>
    </location>
</feature>
<feature type="topological domain" description="Cytoplasmic" evidence="4">
    <location>
        <begin position="97"/>
        <end position="117"/>
    </location>
</feature>
<feature type="transmembrane region" description="Helical" evidence="4">
    <location>
        <begin position="118"/>
        <end position="138"/>
    </location>
</feature>
<feature type="topological domain" description="Lumenal" evidence="4">
    <location>
        <begin position="139"/>
        <end position="144"/>
    </location>
</feature>
<feature type="transmembrane region" description="Helical" evidence="4">
    <location>
        <begin position="145"/>
        <end position="165"/>
    </location>
</feature>
<feature type="topological domain" description="Cytoplasmic" evidence="4">
    <location>
        <begin position="166"/>
        <end position="172"/>
    </location>
</feature>
<feature type="transmembrane region" description="Helical" evidence="4">
    <location>
        <begin position="173"/>
        <end position="193"/>
    </location>
</feature>
<feature type="topological domain" description="Lumenal" evidence="4">
    <location>
        <begin position="194"/>
        <end position="240"/>
    </location>
</feature>
<feature type="transmembrane region" description="Helical" evidence="4">
    <location>
        <begin position="241"/>
        <end position="261"/>
    </location>
</feature>
<feature type="topological domain" description="Cytoplasmic" evidence="4">
    <location>
        <begin position="262"/>
        <end position="288"/>
    </location>
</feature>
<feature type="transmembrane region" description="Helical" evidence="4">
    <location>
        <begin position="289"/>
        <end position="309"/>
    </location>
</feature>
<feature type="topological domain" description="Lumenal" evidence="4">
    <location>
        <begin position="310"/>
        <end position="354"/>
    </location>
</feature>
<feature type="transmembrane region" description="Helical" evidence="4">
    <location>
        <begin position="355"/>
        <end position="375"/>
    </location>
</feature>
<feature type="topological domain" description="Cytoplasmic" evidence="4">
    <location>
        <begin position="376"/>
        <end position="420"/>
    </location>
</feature>
<feature type="transmembrane region" description="Helical" evidence="4">
    <location>
        <begin position="421"/>
        <end position="441"/>
    </location>
</feature>
<feature type="topological domain" description="Lumenal" evidence="4">
    <location>
        <begin position="442"/>
        <end position="445"/>
    </location>
</feature>
<feature type="transmembrane region" description="Helical" evidence="4">
    <location>
        <begin position="446"/>
        <end position="462"/>
    </location>
</feature>
<feature type="topological domain" description="Cytoplasmic" evidence="4">
    <location>
        <begin position="463"/>
        <end position="476"/>
    </location>
</feature>
<evidence type="ECO:0000250" key="1"/>
<evidence type="ECO:0000250" key="2">
    <source>
        <dbReference type="UniProtKB" id="P38377"/>
    </source>
</evidence>
<evidence type="ECO:0000250" key="3">
    <source>
        <dbReference type="UniProtKB" id="P61619"/>
    </source>
</evidence>
<evidence type="ECO:0000255" key="4"/>
<evidence type="ECO:0000305" key="5"/>
<protein>
    <recommendedName>
        <fullName>Protein transport protein Sec61 subunit alpha</fullName>
    </recommendedName>
</protein>
<gene>
    <name type="primary">sec61a</name>
</gene>
<accession>Q8AY33</accession>
<keyword id="KW-0217">Developmental protein</keyword>
<keyword id="KW-0256">Endoplasmic reticulum</keyword>
<keyword id="KW-0472">Membrane</keyword>
<keyword id="KW-0653">Protein transport</keyword>
<keyword id="KW-0811">Translocation</keyword>
<keyword id="KW-0812">Transmembrane</keyword>
<keyword id="KW-1133">Transmembrane helix</keyword>
<keyword id="KW-0813">Transport</keyword>
<dbReference type="EMBL" id="AY103474">
    <property type="protein sequence ID" value="AAM52490.1"/>
    <property type="molecule type" value="mRNA"/>
</dbReference>
<dbReference type="SMR" id="Q8AY33"/>
<dbReference type="GO" id="GO:0005789">
    <property type="term" value="C:endoplasmic reticulum membrane"/>
    <property type="evidence" value="ECO:0000250"/>
    <property type="project" value="UniProtKB"/>
</dbReference>
<dbReference type="GO" id="GO:0039019">
    <property type="term" value="P:pronephric nephron development"/>
    <property type="evidence" value="ECO:0000250"/>
    <property type="project" value="UniProtKB"/>
</dbReference>
<dbReference type="GO" id="GO:0045047">
    <property type="term" value="P:protein targeting to ER"/>
    <property type="evidence" value="ECO:0000250"/>
    <property type="project" value="UniProtKB"/>
</dbReference>
<dbReference type="GO" id="GO:0015031">
    <property type="term" value="P:protein transport"/>
    <property type="evidence" value="ECO:0007669"/>
    <property type="project" value="UniProtKB-KW"/>
</dbReference>
<dbReference type="FunFam" id="1.10.3370.10:FF:000002">
    <property type="entry name" value="Transport Sec61 subunit alpha isoform 2"/>
    <property type="match status" value="1"/>
</dbReference>
<dbReference type="Gene3D" id="1.10.3370.10">
    <property type="entry name" value="SecY subunit domain"/>
    <property type="match status" value="1"/>
</dbReference>
<dbReference type="InterPro" id="IPR002208">
    <property type="entry name" value="SecY/SEC61-alpha"/>
</dbReference>
<dbReference type="InterPro" id="IPR030659">
    <property type="entry name" value="SecY_CS"/>
</dbReference>
<dbReference type="InterPro" id="IPR023201">
    <property type="entry name" value="SecY_dom_sf"/>
</dbReference>
<dbReference type="InterPro" id="IPR019561">
    <property type="entry name" value="Translocon_Sec61/SecY_plug_dom"/>
</dbReference>
<dbReference type="NCBIfam" id="TIGR00967">
    <property type="entry name" value="3a0501s007"/>
    <property type="match status" value="1"/>
</dbReference>
<dbReference type="NCBIfam" id="NF006341">
    <property type="entry name" value="PRK08568.1-5"/>
    <property type="match status" value="1"/>
</dbReference>
<dbReference type="PANTHER" id="PTHR10906">
    <property type="entry name" value="SECY/SEC61-ALPHA FAMILY MEMBER"/>
    <property type="match status" value="1"/>
</dbReference>
<dbReference type="Pfam" id="PF10559">
    <property type="entry name" value="Plug_translocon"/>
    <property type="match status" value="1"/>
</dbReference>
<dbReference type="Pfam" id="PF00344">
    <property type="entry name" value="SecY"/>
    <property type="match status" value="1"/>
</dbReference>
<dbReference type="PIRSF" id="PIRSF004557">
    <property type="entry name" value="SecY"/>
    <property type="match status" value="1"/>
</dbReference>
<dbReference type="SUPFAM" id="SSF103491">
    <property type="entry name" value="Preprotein translocase SecY subunit"/>
    <property type="match status" value="1"/>
</dbReference>
<dbReference type="PROSITE" id="PS00755">
    <property type="entry name" value="SECY_1"/>
    <property type="match status" value="1"/>
</dbReference>
<dbReference type="PROSITE" id="PS00756">
    <property type="entry name" value="SECY_2"/>
    <property type="match status" value="1"/>
</dbReference>
<reference key="1">
    <citation type="journal article" date="2003" name="J. Cell Sci.">
        <title>Protein translocation across the endoplasmic reticulum membrane in cold-adapted organisms.</title>
        <authorList>
            <person name="Romisch K."/>
            <person name="Collie N."/>
            <person name="Soto N."/>
            <person name="Logue J."/>
            <person name="Lindsay M."/>
            <person name="Scheper W."/>
            <person name="Cheng C.-H.C."/>
        </authorList>
    </citation>
    <scope>NUCLEOTIDE SEQUENCE [MRNA]</scope>
    <source>
        <tissue>Liver</tissue>
    </source>
</reference>